<proteinExistence type="inferred from homology"/>
<sequence length="396" mass="43469">MTKSEDIIKKTEHYGAPNYKPLPIVISEAEGIWITDPEGNKYMDMLAAYSAVNQGHRHPKVIEALKEQADKVTLVSRAFNSDNLGDWYEKVSELTGKEKVLPMNTGAEAVETAVKAARRWAYEHKDIEPDKAEIIAFNGNFHGRTMAPVSLSSEAEYQRGYGPLLEGFLKVDFGDVDQLKDAINENTAAILVEPIQGEAGINVPPEGYLKEIRKLADENNILFIADEIQSGLGRSGKTFATDWDGVKLDVYILGKALGGGVLPISAVAADSEVLDVFTPGSHGSTFGGNPLAAAVSIAALDVLEDEKLAERSRELGEYFQDELKKIDNPVIKEVRGRGLFIGVELNEDARPYAEALKEEGLLCKETHDTVIRFAPPLIITKEEIDDALERIKKVFS</sequence>
<accession>B9DIU0</accession>
<keyword id="KW-0028">Amino-acid biosynthesis</keyword>
<keyword id="KW-0032">Aminotransferase</keyword>
<keyword id="KW-0963">Cytoplasm</keyword>
<keyword id="KW-0641">Proline biosynthesis</keyword>
<keyword id="KW-0663">Pyridoxal phosphate</keyword>
<keyword id="KW-1185">Reference proteome</keyword>
<keyword id="KW-0808">Transferase</keyword>
<protein>
    <recommendedName>
        <fullName evidence="1">Ornithine aminotransferase</fullName>
        <shortName evidence="1">OAT</shortName>
        <ecNumber evidence="1">2.6.1.13</ecNumber>
    </recommendedName>
    <alternativeName>
        <fullName evidence="1">Ornithine--oxo-acid aminotransferase</fullName>
    </alternativeName>
</protein>
<dbReference type="EC" id="2.6.1.13" evidence="1"/>
<dbReference type="EMBL" id="AM295250">
    <property type="protein sequence ID" value="CAL27479.1"/>
    <property type="molecule type" value="Genomic_DNA"/>
</dbReference>
<dbReference type="RefSeq" id="WP_015899823.1">
    <property type="nucleotide sequence ID" value="NC_012121.1"/>
</dbReference>
<dbReference type="SMR" id="B9DIU0"/>
<dbReference type="KEGG" id="sca:SCA_0565"/>
<dbReference type="eggNOG" id="COG4992">
    <property type="taxonomic scope" value="Bacteria"/>
</dbReference>
<dbReference type="HOGENOM" id="CLU_016922_10_3_9"/>
<dbReference type="OrthoDB" id="9807885at2"/>
<dbReference type="BioCyc" id="SCAR396513:SCA_RS02890-MONOMER"/>
<dbReference type="UniPathway" id="UPA00098">
    <property type="reaction ID" value="UER00358"/>
</dbReference>
<dbReference type="Proteomes" id="UP000000444">
    <property type="component" value="Chromosome"/>
</dbReference>
<dbReference type="GO" id="GO:0005737">
    <property type="term" value="C:cytoplasm"/>
    <property type="evidence" value="ECO:0007669"/>
    <property type="project" value="UniProtKB-SubCell"/>
</dbReference>
<dbReference type="GO" id="GO:0042802">
    <property type="term" value="F:identical protein binding"/>
    <property type="evidence" value="ECO:0007669"/>
    <property type="project" value="TreeGrafter"/>
</dbReference>
<dbReference type="GO" id="GO:0004587">
    <property type="term" value="F:ornithine aminotransferase activity"/>
    <property type="evidence" value="ECO:0007669"/>
    <property type="project" value="UniProtKB-UniRule"/>
</dbReference>
<dbReference type="GO" id="GO:0030170">
    <property type="term" value="F:pyridoxal phosphate binding"/>
    <property type="evidence" value="ECO:0007669"/>
    <property type="project" value="UniProtKB-UniRule"/>
</dbReference>
<dbReference type="GO" id="GO:0055129">
    <property type="term" value="P:L-proline biosynthetic process"/>
    <property type="evidence" value="ECO:0007669"/>
    <property type="project" value="UniProtKB-UniRule"/>
</dbReference>
<dbReference type="CDD" id="cd00610">
    <property type="entry name" value="OAT_like"/>
    <property type="match status" value="1"/>
</dbReference>
<dbReference type="FunFam" id="3.40.640.10:FF:000011">
    <property type="entry name" value="Ornithine aminotransferase"/>
    <property type="match status" value="1"/>
</dbReference>
<dbReference type="Gene3D" id="3.90.1150.10">
    <property type="entry name" value="Aspartate Aminotransferase, domain 1"/>
    <property type="match status" value="1"/>
</dbReference>
<dbReference type="Gene3D" id="3.40.640.10">
    <property type="entry name" value="Type I PLP-dependent aspartate aminotransferase-like (Major domain)"/>
    <property type="match status" value="1"/>
</dbReference>
<dbReference type="HAMAP" id="MF_01689">
    <property type="entry name" value="Ornith_aminotrans_3"/>
    <property type="match status" value="1"/>
</dbReference>
<dbReference type="InterPro" id="IPR005814">
    <property type="entry name" value="Aminotrans_3"/>
</dbReference>
<dbReference type="InterPro" id="IPR049704">
    <property type="entry name" value="Aminotrans_3_PPA_site"/>
</dbReference>
<dbReference type="InterPro" id="IPR050103">
    <property type="entry name" value="Class-III_PLP-dep_AT"/>
</dbReference>
<dbReference type="InterPro" id="IPR010164">
    <property type="entry name" value="Orn_aminotrans"/>
</dbReference>
<dbReference type="InterPro" id="IPR034757">
    <property type="entry name" value="Ornith_aminotrans_bact"/>
</dbReference>
<dbReference type="InterPro" id="IPR015424">
    <property type="entry name" value="PyrdxlP-dep_Trfase"/>
</dbReference>
<dbReference type="InterPro" id="IPR015421">
    <property type="entry name" value="PyrdxlP-dep_Trfase_major"/>
</dbReference>
<dbReference type="InterPro" id="IPR015422">
    <property type="entry name" value="PyrdxlP-dep_Trfase_small"/>
</dbReference>
<dbReference type="NCBIfam" id="TIGR01885">
    <property type="entry name" value="Orn_aminotrans"/>
    <property type="match status" value="1"/>
</dbReference>
<dbReference type="NCBIfam" id="NF002325">
    <property type="entry name" value="PRK01278.1"/>
    <property type="match status" value="1"/>
</dbReference>
<dbReference type="NCBIfam" id="NF003145">
    <property type="entry name" value="PRK04073.1"/>
    <property type="match status" value="1"/>
</dbReference>
<dbReference type="PANTHER" id="PTHR11986">
    <property type="entry name" value="AMINOTRANSFERASE CLASS III"/>
    <property type="match status" value="1"/>
</dbReference>
<dbReference type="PANTHER" id="PTHR11986:SF18">
    <property type="entry name" value="ORNITHINE AMINOTRANSFERASE, MITOCHONDRIAL"/>
    <property type="match status" value="1"/>
</dbReference>
<dbReference type="Pfam" id="PF00202">
    <property type="entry name" value="Aminotran_3"/>
    <property type="match status" value="1"/>
</dbReference>
<dbReference type="PIRSF" id="PIRSF000521">
    <property type="entry name" value="Transaminase_4ab_Lys_Orn"/>
    <property type="match status" value="1"/>
</dbReference>
<dbReference type="SUPFAM" id="SSF53383">
    <property type="entry name" value="PLP-dependent transferases"/>
    <property type="match status" value="1"/>
</dbReference>
<dbReference type="PROSITE" id="PS00600">
    <property type="entry name" value="AA_TRANSFER_CLASS_3"/>
    <property type="match status" value="1"/>
</dbReference>
<comment type="function">
    <text evidence="1">Catalyzes the interconversion of ornithine to glutamate semialdehyde.</text>
</comment>
<comment type="catalytic activity">
    <reaction evidence="1">
        <text>a 2-oxocarboxylate + L-ornithine = L-glutamate 5-semialdehyde + an L-alpha-amino acid</text>
        <dbReference type="Rhea" id="RHEA:13877"/>
        <dbReference type="ChEBI" id="CHEBI:35179"/>
        <dbReference type="ChEBI" id="CHEBI:46911"/>
        <dbReference type="ChEBI" id="CHEBI:58066"/>
        <dbReference type="ChEBI" id="CHEBI:59869"/>
        <dbReference type="EC" id="2.6.1.13"/>
    </reaction>
</comment>
<comment type="cofactor">
    <cofactor evidence="1">
        <name>pyridoxal 5'-phosphate</name>
        <dbReference type="ChEBI" id="CHEBI:597326"/>
    </cofactor>
</comment>
<comment type="pathway">
    <text evidence="1">Amino-acid biosynthesis; L-proline biosynthesis; L-glutamate 5-semialdehyde from L-ornithine: step 1/1.</text>
</comment>
<comment type="subcellular location">
    <subcellularLocation>
        <location evidence="1">Cytoplasm</location>
    </subcellularLocation>
</comment>
<comment type="similarity">
    <text evidence="1">Belongs to the class-III pyridoxal-phosphate-dependent aminotransferase family. OAT subfamily.</text>
</comment>
<organism>
    <name type="scientific">Staphylococcus carnosus (strain TM300)</name>
    <dbReference type="NCBI Taxonomy" id="396513"/>
    <lineage>
        <taxon>Bacteria</taxon>
        <taxon>Bacillati</taxon>
        <taxon>Bacillota</taxon>
        <taxon>Bacilli</taxon>
        <taxon>Bacillales</taxon>
        <taxon>Staphylococcaceae</taxon>
        <taxon>Staphylococcus</taxon>
    </lineage>
</organism>
<reference key="1">
    <citation type="journal article" date="2009" name="Appl. Environ. Microbiol.">
        <title>Genome analysis of the meat starter culture bacterium Staphylococcus carnosus TM300.</title>
        <authorList>
            <person name="Rosenstein R."/>
            <person name="Nerz C."/>
            <person name="Biswas L."/>
            <person name="Resch A."/>
            <person name="Raddatz G."/>
            <person name="Schuster S.C."/>
            <person name="Goetz F."/>
        </authorList>
    </citation>
    <scope>NUCLEOTIDE SEQUENCE [LARGE SCALE GENOMIC DNA]</scope>
    <source>
        <strain>TM300</strain>
    </source>
</reference>
<feature type="chain" id="PRO_1000187441" description="Ornithine aminotransferase">
    <location>
        <begin position="1"/>
        <end position="396"/>
    </location>
</feature>
<feature type="modified residue" description="N6-(pyridoxal phosphate)lysine" evidence="1">
    <location>
        <position position="255"/>
    </location>
</feature>
<evidence type="ECO:0000255" key="1">
    <source>
        <dbReference type="HAMAP-Rule" id="MF_01689"/>
    </source>
</evidence>
<name>OAT_STACT</name>
<gene>
    <name evidence="1" type="primary">rocD</name>
    <name type="ordered locus">Sca_0565</name>
</gene>